<accession>Q833J0</accession>
<dbReference type="EC" id="5.3.1.1" evidence="1"/>
<dbReference type="EMBL" id="AE016830">
    <property type="protein sequence ID" value="AAO81708.1"/>
    <property type="molecule type" value="Genomic_DNA"/>
</dbReference>
<dbReference type="RefSeq" id="NP_815638.1">
    <property type="nucleotide sequence ID" value="NC_004668.1"/>
</dbReference>
<dbReference type="RefSeq" id="WP_002357096.1">
    <property type="nucleotide sequence ID" value="NZ_KE136528.1"/>
</dbReference>
<dbReference type="SMR" id="Q833J0"/>
<dbReference type="STRING" id="226185.EF_1962"/>
<dbReference type="EnsemblBacteria" id="AAO81708">
    <property type="protein sequence ID" value="AAO81708"/>
    <property type="gene ID" value="EF_1962"/>
</dbReference>
<dbReference type="KEGG" id="efa:EF1962"/>
<dbReference type="PATRIC" id="fig|226185.45.peg.1563"/>
<dbReference type="eggNOG" id="COG0149">
    <property type="taxonomic scope" value="Bacteria"/>
</dbReference>
<dbReference type="HOGENOM" id="CLU_024251_2_3_9"/>
<dbReference type="UniPathway" id="UPA00109">
    <property type="reaction ID" value="UER00189"/>
</dbReference>
<dbReference type="UniPathway" id="UPA00138"/>
<dbReference type="Proteomes" id="UP000001415">
    <property type="component" value="Chromosome"/>
</dbReference>
<dbReference type="GO" id="GO:0005829">
    <property type="term" value="C:cytosol"/>
    <property type="evidence" value="ECO:0007669"/>
    <property type="project" value="TreeGrafter"/>
</dbReference>
<dbReference type="GO" id="GO:0004807">
    <property type="term" value="F:triose-phosphate isomerase activity"/>
    <property type="evidence" value="ECO:0007669"/>
    <property type="project" value="UniProtKB-UniRule"/>
</dbReference>
<dbReference type="GO" id="GO:0006094">
    <property type="term" value="P:gluconeogenesis"/>
    <property type="evidence" value="ECO:0007669"/>
    <property type="project" value="UniProtKB-UniRule"/>
</dbReference>
<dbReference type="GO" id="GO:0046166">
    <property type="term" value="P:glyceraldehyde-3-phosphate biosynthetic process"/>
    <property type="evidence" value="ECO:0007669"/>
    <property type="project" value="TreeGrafter"/>
</dbReference>
<dbReference type="GO" id="GO:0019563">
    <property type="term" value="P:glycerol catabolic process"/>
    <property type="evidence" value="ECO:0007669"/>
    <property type="project" value="TreeGrafter"/>
</dbReference>
<dbReference type="GO" id="GO:0006096">
    <property type="term" value="P:glycolytic process"/>
    <property type="evidence" value="ECO:0007669"/>
    <property type="project" value="UniProtKB-UniRule"/>
</dbReference>
<dbReference type="CDD" id="cd00311">
    <property type="entry name" value="TIM"/>
    <property type="match status" value="1"/>
</dbReference>
<dbReference type="FunFam" id="3.20.20.70:FF:000016">
    <property type="entry name" value="Triosephosphate isomerase"/>
    <property type="match status" value="1"/>
</dbReference>
<dbReference type="Gene3D" id="3.20.20.70">
    <property type="entry name" value="Aldolase class I"/>
    <property type="match status" value="1"/>
</dbReference>
<dbReference type="HAMAP" id="MF_00147_B">
    <property type="entry name" value="TIM_B"/>
    <property type="match status" value="1"/>
</dbReference>
<dbReference type="InterPro" id="IPR013785">
    <property type="entry name" value="Aldolase_TIM"/>
</dbReference>
<dbReference type="InterPro" id="IPR035990">
    <property type="entry name" value="TIM_sf"/>
</dbReference>
<dbReference type="InterPro" id="IPR022896">
    <property type="entry name" value="TrioseP_Isoase_bac/euk"/>
</dbReference>
<dbReference type="InterPro" id="IPR000652">
    <property type="entry name" value="Triosephosphate_isomerase"/>
</dbReference>
<dbReference type="InterPro" id="IPR020861">
    <property type="entry name" value="Triosephosphate_isomerase_AS"/>
</dbReference>
<dbReference type="NCBIfam" id="TIGR00419">
    <property type="entry name" value="tim"/>
    <property type="match status" value="1"/>
</dbReference>
<dbReference type="PANTHER" id="PTHR21139">
    <property type="entry name" value="TRIOSEPHOSPHATE ISOMERASE"/>
    <property type="match status" value="1"/>
</dbReference>
<dbReference type="PANTHER" id="PTHR21139:SF42">
    <property type="entry name" value="TRIOSEPHOSPHATE ISOMERASE"/>
    <property type="match status" value="1"/>
</dbReference>
<dbReference type="Pfam" id="PF00121">
    <property type="entry name" value="TIM"/>
    <property type="match status" value="1"/>
</dbReference>
<dbReference type="SUPFAM" id="SSF51351">
    <property type="entry name" value="Triosephosphate isomerase (TIM)"/>
    <property type="match status" value="1"/>
</dbReference>
<dbReference type="PROSITE" id="PS00171">
    <property type="entry name" value="TIM_1"/>
    <property type="match status" value="1"/>
</dbReference>
<dbReference type="PROSITE" id="PS51440">
    <property type="entry name" value="TIM_2"/>
    <property type="match status" value="1"/>
</dbReference>
<feature type="chain" id="PRO_0000090220" description="Triosephosphate isomerase">
    <location>
        <begin position="1"/>
        <end position="251"/>
    </location>
</feature>
<feature type="active site" description="Electrophile" evidence="1">
    <location>
        <position position="95"/>
    </location>
</feature>
<feature type="active site" description="Proton acceptor" evidence="1">
    <location>
        <position position="167"/>
    </location>
</feature>
<feature type="binding site" evidence="1">
    <location>
        <begin position="9"/>
        <end position="11"/>
    </location>
    <ligand>
        <name>substrate</name>
    </ligand>
</feature>
<feature type="binding site" evidence="1">
    <location>
        <position position="173"/>
    </location>
    <ligand>
        <name>substrate</name>
    </ligand>
</feature>
<feature type="binding site" evidence="1">
    <location>
        <position position="213"/>
    </location>
    <ligand>
        <name>substrate</name>
    </ligand>
</feature>
<feature type="binding site" evidence="1">
    <location>
        <begin position="234"/>
        <end position="235"/>
    </location>
    <ligand>
        <name>substrate</name>
    </ligand>
</feature>
<reference key="1">
    <citation type="journal article" date="2003" name="Science">
        <title>Role of mobile DNA in the evolution of vancomycin-resistant Enterococcus faecalis.</title>
        <authorList>
            <person name="Paulsen I.T."/>
            <person name="Banerjei L."/>
            <person name="Myers G.S.A."/>
            <person name="Nelson K.E."/>
            <person name="Seshadri R."/>
            <person name="Read T.D."/>
            <person name="Fouts D.E."/>
            <person name="Eisen J.A."/>
            <person name="Gill S.R."/>
            <person name="Heidelberg J.F."/>
            <person name="Tettelin H."/>
            <person name="Dodson R.J."/>
            <person name="Umayam L.A."/>
            <person name="Brinkac L.M."/>
            <person name="Beanan M.J."/>
            <person name="Daugherty S.C."/>
            <person name="DeBoy R.T."/>
            <person name="Durkin S.A."/>
            <person name="Kolonay J.F."/>
            <person name="Madupu R."/>
            <person name="Nelson W.C."/>
            <person name="Vamathevan J.J."/>
            <person name="Tran B."/>
            <person name="Upton J."/>
            <person name="Hansen T."/>
            <person name="Shetty J."/>
            <person name="Khouri H.M."/>
            <person name="Utterback T.R."/>
            <person name="Radune D."/>
            <person name="Ketchum K.A."/>
            <person name="Dougherty B.A."/>
            <person name="Fraser C.M."/>
        </authorList>
    </citation>
    <scope>NUCLEOTIDE SEQUENCE [LARGE SCALE GENOMIC DNA]</scope>
    <source>
        <strain>ATCC 700802 / V583</strain>
    </source>
</reference>
<keyword id="KW-0963">Cytoplasm</keyword>
<keyword id="KW-0312">Gluconeogenesis</keyword>
<keyword id="KW-0324">Glycolysis</keyword>
<keyword id="KW-0413">Isomerase</keyword>
<keyword id="KW-1185">Reference proteome</keyword>
<comment type="function">
    <text evidence="1">Involved in the gluconeogenesis. Catalyzes stereospecifically the conversion of dihydroxyacetone phosphate (DHAP) to D-glyceraldehyde-3-phosphate (G3P).</text>
</comment>
<comment type="catalytic activity">
    <reaction evidence="1">
        <text>D-glyceraldehyde 3-phosphate = dihydroxyacetone phosphate</text>
        <dbReference type="Rhea" id="RHEA:18585"/>
        <dbReference type="ChEBI" id="CHEBI:57642"/>
        <dbReference type="ChEBI" id="CHEBI:59776"/>
        <dbReference type="EC" id="5.3.1.1"/>
    </reaction>
</comment>
<comment type="pathway">
    <text evidence="1">Carbohydrate biosynthesis; gluconeogenesis.</text>
</comment>
<comment type="pathway">
    <text evidence="1">Carbohydrate degradation; glycolysis; D-glyceraldehyde 3-phosphate from glycerone phosphate: step 1/1.</text>
</comment>
<comment type="subunit">
    <text evidence="1">Homodimer.</text>
</comment>
<comment type="subcellular location">
    <subcellularLocation>
        <location evidence="1">Cytoplasm</location>
    </subcellularLocation>
</comment>
<comment type="similarity">
    <text evidence="1">Belongs to the triosephosphate isomerase family.</text>
</comment>
<gene>
    <name evidence="1" type="primary">tpiA</name>
    <name type="ordered locus">EF_1962</name>
</gene>
<sequence>MRKPIIAGNWKMNKTLSEAQSFAEAVKNAVPSNDVVDAVIGSPALFLAPLAWNLKDSEVKLAAQNCYWENAGAFTGENSPAAIADLGVDYVIIGHSERREYFHETDEDINKKAKAIFANGMTPIFCCGETLETYEAGKTAEWIEGQITKGLVGLSNEQVASMVIAYEPIWAIGTGKSADANIADEICGVVRSTVEKLYGKEVSEAVRIQYGGSVKPENIAEYMAKENVDGALVGGASLEADSFLALLDAVK</sequence>
<proteinExistence type="inferred from homology"/>
<name>TPIS_ENTFA</name>
<evidence type="ECO:0000255" key="1">
    <source>
        <dbReference type="HAMAP-Rule" id="MF_00147"/>
    </source>
</evidence>
<protein>
    <recommendedName>
        <fullName evidence="1">Triosephosphate isomerase</fullName>
        <shortName evidence="1">TIM</shortName>
        <shortName evidence="1">TPI</shortName>
        <ecNumber evidence="1">5.3.1.1</ecNumber>
    </recommendedName>
    <alternativeName>
        <fullName evidence="1">Triose-phosphate isomerase</fullName>
    </alternativeName>
</protein>
<organism>
    <name type="scientific">Enterococcus faecalis (strain ATCC 700802 / V583)</name>
    <dbReference type="NCBI Taxonomy" id="226185"/>
    <lineage>
        <taxon>Bacteria</taxon>
        <taxon>Bacillati</taxon>
        <taxon>Bacillota</taxon>
        <taxon>Bacilli</taxon>
        <taxon>Lactobacillales</taxon>
        <taxon>Enterococcaceae</taxon>
        <taxon>Enterococcus</taxon>
    </lineage>
</organism>